<protein>
    <recommendedName>
        <fullName evidence="1">Chaperonin GroEL</fullName>
        <ecNumber evidence="1">5.6.1.7</ecNumber>
    </recommendedName>
    <alternativeName>
        <fullName evidence="1">60 kDa chaperonin</fullName>
    </alternativeName>
    <alternativeName>
        <fullName evidence="1">Chaperonin-60</fullName>
        <shortName evidence="1">Cpn60</shortName>
    </alternativeName>
</protein>
<organism>
    <name type="scientific">Dehalococcoides mccartyi (strain ATCC BAA-2266 / KCTC 15142 / 195)</name>
    <name type="common">Dehalococcoides ethenogenes (strain 195)</name>
    <dbReference type="NCBI Taxonomy" id="243164"/>
    <lineage>
        <taxon>Bacteria</taxon>
        <taxon>Bacillati</taxon>
        <taxon>Chloroflexota</taxon>
        <taxon>Dehalococcoidia</taxon>
        <taxon>Dehalococcoidales</taxon>
        <taxon>Dehalococcoidaceae</taxon>
        <taxon>Dehalococcoides</taxon>
    </lineage>
</organism>
<feature type="chain" id="PRO_0000256902" description="Chaperonin GroEL">
    <location>
        <begin position="1"/>
        <end position="537"/>
    </location>
</feature>
<feature type="binding site" evidence="1">
    <location>
        <begin position="29"/>
        <end position="32"/>
    </location>
    <ligand>
        <name>ATP</name>
        <dbReference type="ChEBI" id="CHEBI:30616"/>
    </ligand>
</feature>
<feature type="binding site" evidence="1">
    <location>
        <begin position="86"/>
        <end position="90"/>
    </location>
    <ligand>
        <name>ATP</name>
        <dbReference type="ChEBI" id="CHEBI:30616"/>
    </ligand>
</feature>
<feature type="binding site" evidence="1">
    <location>
        <position position="413"/>
    </location>
    <ligand>
        <name>ATP</name>
        <dbReference type="ChEBI" id="CHEBI:30616"/>
    </ligand>
</feature>
<feature type="binding site" evidence="1">
    <location>
        <position position="492"/>
    </location>
    <ligand>
        <name>ATP</name>
        <dbReference type="ChEBI" id="CHEBI:30616"/>
    </ligand>
</feature>
<accession>Q3Z6L3</accession>
<sequence length="537" mass="57282">MAKQIIFGEKVRVSLKKGVDTLANTVRVTLGPKGHPVALERKWGAPTVIDDGVTIARDIELPDAFENMGAQLVKEAATRTSDAAGDGTTTSIVLAQALINEAFKNIAAGAEPINLKRGIEKAVAALKAQLRKNSTPVKGKQQIVQVATITGKDPEIGNLIADVMDKVGKDGVITIEESRGLRYETSYVEGMQFDRGYISAYFVTDPGRMESIMEDATILMTDRKIETVAELLPALEKILQISKNLVIVAENVEAEALATLVVNKLRGNLNILAVKAPGYGDRQKAMLEDMAILTGGHVISKEAGRKLDSVTEADLGHARRVVSNKDKTTIIDGEGSAEAIKNRIKQIKAQIEETESAFDREKLQERQAALVGGVAVIAVGAATETEMKERKARVEDALAATRAAIEEGILPGGGTGLLNALPCLDALKLEGDEATGVSIVRKALIEPVRWIATNAGKDGNVIVDKVKNSPVGHGYNAEKDVFGDMAEMGIIDPTMVVRSALENASSIANMVLITDSLVADIQDKNPAPPMPEAPGMY</sequence>
<keyword id="KW-0067">ATP-binding</keyword>
<keyword id="KW-0143">Chaperone</keyword>
<keyword id="KW-0963">Cytoplasm</keyword>
<keyword id="KW-0413">Isomerase</keyword>
<keyword id="KW-0547">Nucleotide-binding</keyword>
<comment type="function">
    <text evidence="1">Together with its co-chaperonin GroES, plays an essential role in assisting protein folding. The GroEL-GroES system forms a nano-cage that allows encapsulation of the non-native substrate proteins and provides a physical environment optimized to promote and accelerate protein folding.</text>
</comment>
<comment type="catalytic activity">
    <reaction evidence="1">
        <text>ATP + H2O + a folded polypeptide = ADP + phosphate + an unfolded polypeptide.</text>
        <dbReference type="EC" id="5.6.1.7"/>
    </reaction>
</comment>
<comment type="subunit">
    <text evidence="1">Forms a cylinder of 14 subunits composed of two heptameric rings stacked back-to-back. Interacts with the co-chaperonin GroES.</text>
</comment>
<comment type="subcellular location">
    <subcellularLocation>
        <location evidence="1">Cytoplasm</location>
    </subcellularLocation>
</comment>
<comment type="similarity">
    <text evidence="1">Belongs to the chaperonin (HSP60) family.</text>
</comment>
<dbReference type="EC" id="5.6.1.7" evidence="1"/>
<dbReference type="EMBL" id="CP000027">
    <property type="protein sequence ID" value="AAW39285.1"/>
    <property type="molecule type" value="Genomic_DNA"/>
</dbReference>
<dbReference type="RefSeq" id="WP_010937113.1">
    <property type="nucleotide sequence ID" value="NC_002936.3"/>
</dbReference>
<dbReference type="SMR" id="Q3Z6L3"/>
<dbReference type="FunCoup" id="Q3Z6L3">
    <property type="interactions" value="343"/>
</dbReference>
<dbReference type="STRING" id="243164.DET1428"/>
<dbReference type="GeneID" id="3229243"/>
<dbReference type="KEGG" id="det:DET1428"/>
<dbReference type="PATRIC" id="fig|243164.10.peg.1355"/>
<dbReference type="eggNOG" id="COG0459">
    <property type="taxonomic scope" value="Bacteria"/>
</dbReference>
<dbReference type="HOGENOM" id="CLU_016503_3_0_0"/>
<dbReference type="InParanoid" id="Q3Z6L3"/>
<dbReference type="Proteomes" id="UP000008289">
    <property type="component" value="Chromosome"/>
</dbReference>
<dbReference type="GO" id="GO:0005737">
    <property type="term" value="C:cytoplasm"/>
    <property type="evidence" value="ECO:0007669"/>
    <property type="project" value="UniProtKB-SubCell"/>
</dbReference>
<dbReference type="GO" id="GO:0005524">
    <property type="term" value="F:ATP binding"/>
    <property type="evidence" value="ECO:0007669"/>
    <property type="project" value="UniProtKB-UniRule"/>
</dbReference>
<dbReference type="GO" id="GO:0140662">
    <property type="term" value="F:ATP-dependent protein folding chaperone"/>
    <property type="evidence" value="ECO:0007669"/>
    <property type="project" value="InterPro"/>
</dbReference>
<dbReference type="GO" id="GO:0016853">
    <property type="term" value="F:isomerase activity"/>
    <property type="evidence" value="ECO:0007669"/>
    <property type="project" value="UniProtKB-KW"/>
</dbReference>
<dbReference type="GO" id="GO:0051082">
    <property type="term" value="F:unfolded protein binding"/>
    <property type="evidence" value="ECO:0007669"/>
    <property type="project" value="UniProtKB-UniRule"/>
</dbReference>
<dbReference type="GO" id="GO:0042026">
    <property type="term" value="P:protein refolding"/>
    <property type="evidence" value="ECO:0007669"/>
    <property type="project" value="UniProtKB-UniRule"/>
</dbReference>
<dbReference type="CDD" id="cd03344">
    <property type="entry name" value="GroEL"/>
    <property type="match status" value="1"/>
</dbReference>
<dbReference type="FunFam" id="3.50.7.10:FF:000001">
    <property type="entry name" value="60 kDa chaperonin"/>
    <property type="match status" value="1"/>
</dbReference>
<dbReference type="Gene3D" id="3.50.7.10">
    <property type="entry name" value="GroEL"/>
    <property type="match status" value="1"/>
</dbReference>
<dbReference type="Gene3D" id="1.10.560.10">
    <property type="entry name" value="GroEL-like equatorial domain"/>
    <property type="match status" value="1"/>
</dbReference>
<dbReference type="Gene3D" id="3.30.260.10">
    <property type="entry name" value="TCP-1-like chaperonin intermediate domain"/>
    <property type="match status" value="1"/>
</dbReference>
<dbReference type="HAMAP" id="MF_00600">
    <property type="entry name" value="CH60"/>
    <property type="match status" value="1"/>
</dbReference>
<dbReference type="InterPro" id="IPR018370">
    <property type="entry name" value="Chaperonin_Cpn60_CS"/>
</dbReference>
<dbReference type="InterPro" id="IPR001844">
    <property type="entry name" value="Cpn60/GroEL"/>
</dbReference>
<dbReference type="InterPro" id="IPR002423">
    <property type="entry name" value="Cpn60/GroEL/TCP-1"/>
</dbReference>
<dbReference type="InterPro" id="IPR027409">
    <property type="entry name" value="GroEL-like_apical_dom_sf"/>
</dbReference>
<dbReference type="InterPro" id="IPR027413">
    <property type="entry name" value="GROEL-like_equatorial_sf"/>
</dbReference>
<dbReference type="InterPro" id="IPR027410">
    <property type="entry name" value="TCP-1-like_intermed_sf"/>
</dbReference>
<dbReference type="NCBIfam" id="TIGR02348">
    <property type="entry name" value="GroEL"/>
    <property type="match status" value="1"/>
</dbReference>
<dbReference type="NCBIfam" id="NF000592">
    <property type="entry name" value="PRK00013.1"/>
    <property type="match status" value="1"/>
</dbReference>
<dbReference type="NCBIfam" id="NF009487">
    <property type="entry name" value="PRK12849.1"/>
    <property type="match status" value="1"/>
</dbReference>
<dbReference type="NCBIfam" id="NF009488">
    <property type="entry name" value="PRK12850.1"/>
    <property type="match status" value="1"/>
</dbReference>
<dbReference type="NCBIfam" id="NF009489">
    <property type="entry name" value="PRK12851.1"/>
    <property type="match status" value="1"/>
</dbReference>
<dbReference type="PANTHER" id="PTHR45633">
    <property type="entry name" value="60 KDA HEAT SHOCK PROTEIN, MITOCHONDRIAL"/>
    <property type="match status" value="1"/>
</dbReference>
<dbReference type="Pfam" id="PF00118">
    <property type="entry name" value="Cpn60_TCP1"/>
    <property type="match status" value="1"/>
</dbReference>
<dbReference type="PRINTS" id="PR00298">
    <property type="entry name" value="CHAPERONIN60"/>
</dbReference>
<dbReference type="SUPFAM" id="SSF52029">
    <property type="entry name" value="GroEL apical domain-like"/>
    <property type="match status" value="1"/>
</dbReference>
<dbReference type="SUPFAM" id="SSF48592">
    <property type="entry name" value="GroEL equatorial domain-like"/>
    <property type="match status" value="1"/>
</dbReference>
<dbReference type="SUPFAM" id="SSF54849">
    <property type="entry name" value="GroEL-intermediate domain like"/>
    <property type="match status" value="1"/>
</dbReference>
<dbReference type="PROSITE" id="PS00296">
    <property type="entry name" value="CHAPERONINS_CPN60"/>
    <property type="match status" value="1"/>
</dbReference>
<proteinExistence type="inferred from homology"/>
<reference key="1">
    <citation type="journal article" date="2005" name="Science">
        <title>Genome sequence of the PCE-dechlorinating bacterium Dehalococcoides ethenogenes.</title>
        <authorList>
            <person name="Seshadri R."/>
            <person name="Adrian L."/>
            <person name="Fouts D.E."/>
            <person name="Eisen J.A."/>
            <person name="Phillippy A.M."/>
            <person name="Methe B.A."/>
            <person name="Ward N.L."/>
            <person name="Nelson W.C."/>
            <person name="DeBoy R.T."/>
            <person name="Khouri H.M."/>
            <person name="Kolonay J.F."/>
            <person name="Dodson R.J."/>
            <person name="Daugherty S.C."/>
            <person name="Brinkac L.M."/>
            <person name="Sullivan S.A."/>
            <person name="Madupu R."/>
            <person name="Nelson K.E."/>
            <person name="Kang K.H."/>
            <person name="Impraim M."/>
            <person name="Tran K."/>
            <person name="Robinson J.M."/>
            <person name="Forberger H.A."/>
            <person name="Fraser C.M."/>
            <person name="Zinder S.H."/>
            <person name="Heidelberg J.F."/>
        </authorList>
    </citation>
    <scope>NUCLEOTIDE SEQUENCE [LARGE SCALE GENOMIC DNA]</scope>
    <source>
        <strain>ATCC BAA-2266 / KCTC 15142 / 195</strain>
    </source>
</reference>
<gene>
    <name evidence="1" type="primary">groEL</name>
    <name evidence="1" type="synonym">groL</name>
    <name type="ordered locus">DET1428</name>
</gene>
<evidence type="ECO:0000255" key="1">
    <source>
        <dbReference type="HAMAP-Rule" id="MF_00600"/>
    </source>
</evidence>
<name>CH60_DEHM1</name>